<proteinExistence type="predicted"/>
<dbReference type="EMBL" id="AY653733">
    <property type="protein sequence ID" value="AAV50945.1"/>
    <property type="molecule type" value="Genomic_DNA"/>
</dbReference>
<dbReference type="Proteomes" id="UP000001134">
    <property type="component" value="Genome"/>
</dbReference>
<dbReference type="Gene3D" id="3.60.10.10">
    <property type="entry name" value="Endonuclease/exonuclease/phosphatase"/>
    <property type="match status" value="1"/>
</dbReference>
<dbReference type="Gene3D" id="3.40.50.1000">
    <property type="entry name" value="HAD superfamily/HAD-like"/>
    <property type="match status" value="1"/>
</dbReference>
<dbReference type="InterPro" id="IPR036691">
    <property type="entry name" value="Endo/exonu/phosph_ase_sf"/>
</dbReference>
<dbReference type="InterPro" id="IPR023214">
    <property type="entry name" value="HAD_sf"/>
</dbReference>
<dbReference type="SUPFAM" id="SSF56219">
    <property type="entry name" value="DNase I-like"/>
    <property type="match status" value="1"/>
</dbReference>
<protein>
    <recommendedName>
        <fullName>Uncharacterized protein L684</fullName>
    </recommendedName>
</protein>
<reference key="1">
    <citation type="journal article" date="2004" name="Science">
        <title>The 1.2-megabase genome sequence of Mimivirus.</title>
        <authorList>
            <person name="Raoult D."/>
            <person name="Audic S."/>
            <person name="Robert C."/>
            <person name="Abergel C."/>
            <person name="Renesto P."/>
            <person name="Ogata H."/>
            <person name="La Scola B."/>
            <person name="Susan M."/>
            <person name="Claverie J.-M."/>
        </authorList>
    </citation>
    <scope>NUCLEOTIDE SEQUENCE [LARGE SCALE GENOMIC DNA]</scope>
    <source>
        <strain>Rowbotham-Bradford</strain>
    </source>
</reference>
<feature type="chain" id="PRO_0000071316" description="Uncharacterized protein L684">
    <location>
        <begin position="1"/>
        <end position="498"/>
    </location>
</feature>
<organismHost>
    <name type="scientific">Acanthamoeba polyphaga</name>
    <name type="common">Amoeba</name>
    <dbReference type="NCBI Taxonomy" id="5757"/>
</organismHost>
<organism>
    <name type="scientific">Acanthamoeba polyphaga mimivirus</name>
    <name type="common">APMV</name>
    <dbReference type="NCBI Taxonomy" id="212035"/>
    <lineage>
        <taxon>Viruses</taxon>
        <taxon>Varidnaviria</taxon>
        <taxon>Bamfordvirae</taxon>
        <taxon>Nucleocytoviricota</taxon>
        <taxon>Megaviricetes</taxon>
        <taxon>Imitervirales</taxon>
        <taxon>Mimiviridae</taxon>
        <taxon>Megamimivirinae</taxon>
        <taxon>Mimivirus</taxon>
        <taxon>Mimivirus bradfordmassiliense</taxon>
    </lineage>
</organism>
<sequence length="498" mass="58026">MPKILSYNVFFKSMLTDPVYNYCKPIIKNNGLEYTTCLYNVSKFIASQKDLDFVLLQEATNWKTLQKITLNLSQMETISTCFDVEIIVTFYNKQKYQLDPIDNMFIGYMDSVNRPFHVLFFQNNICLINLHAGHKGDIYFLDKYLVRSLKKLDNYQKFIDKLTTYDIIIGGDFNDELKIDFYILSDNFFGISEGRRLYGNTFEPSCCNPVLNYLGRTKKSYDHILSTLNDNVSTVIPVVKASDHMPIISTITKNIGFDFDGVLHLDVNKPDYEGQRNPYNLIGPYNIFNNIINLILKEILDNNNVYIITARKDTKVNRSVINSHLKKTILKNYINKIPILFSGGKDKTLLLTKYNINTFYDDSCLRINELFLSKILGNLSNLNQLYFVDPDNQSYQLVTKQNINKLCGNFINKNIISLLDQSDNTHNNSNIKLISTFIDFNHNYQFRNPDINYLMKELNDIINENNLDYHQIDYIDKLQDSIVKMIIKELKQNINNLK</sequence>
<keyword id="KW-1185">Reference proteome</keyword>
<gene>
    <name type="ordered locus">MIMI_L684</name>
</gene>
<accession>Q5UNU5</accession>
<name>YL684_MIMIV</name>